<evidence type="ECO:0000255" key="1"/>
<evidence type="ECO:0000256" key="2">
    <source>
        <dbReference type="SAM" id="MobiDB-lite"/>
    </source>
</evidence>
<evidence type="ECO:0000269" key="3">
    <source>
    </source>
</evidence>
<evidence type="ECO:0000269" key="4">
    <source>
    </source>
</evidence>
<evidence type="ECO:0000269" key="5">
    <source>
    </source>
</evidence>
<evidence type="ECO:0000305" key="6"/>
<sequence length="809" mass="89446">MSQDQEEDYSKLPLESRIVHKVWKVRLSAYEECSKSFSLSADGSDNCFELWNNQSELWKSVLTDSNVAAQEAGTAAFVAYCRFSDPSHLLKAREISVLSISEKCLTSPRAGTRENALEALMLLVEADSAAPVIESIIPSLSARSPKVIASNVAAIASLVEQFGAKVIPSKMIIPHISNLFGHADKNVRKEASRLTVNIYRWTGDPLKDLLFKDLRPVQTKELESLFAELPTEPPKQTRFLKSQQPTSEPNVETQVEEQPALENEESEPEPSDDQFDLVEEVDVLPNVDPNLETLMASSKWKDRKEALDKLLPVLSQPKIKDNDFFNLVAILTKSVSKDANIMVVINAAHCIQAMAKGLRSNFSKYASTSINALLERSKEKKANVIESLSSAMDAVLATSSLDDLAELIASFAGNKNPQIKSSCFSLFSRSFSNMTSLPSKFTVDTCAKACVPGVSDTFEPVRSAAAEALGVLMKLVGERAINQYLSPLDDIRKSKIRSFYETATVKAKAPTKKSKVKPSKQEESKVVVPSNAKAVKKSVVPSSPVVPSPRKATNKSLSMDVSKGNAFENGPLLPRPTTRPVSRGLSRGTSSSLQQKVKASTPLNSGALNETVQNLKNMELDDPAPQPAKHSRVDRYEHPKVLEDNDSTISSLESLKRENEELREQLKVEHEENISMQKQLSELKGELNTLRSARKASPIGDRKPAFMRRANTDFLELSTSPSFQRSVREFEPTRPKLYSSIDVNQRSPLASAKTNGNFTFHAELPRSPFSSRANNINPDWTKAIDLAAKLKQKITEMKQTDQRHQGLIH</sequence>
<reference key="1">
    <citation type="journal article" date="2001" name="EMBO J.">
        <title>Fission yeast ch-TOG/XMAP215 homologue Alp14 connects mitotic spindles with the kinetochore and is a component of the Mad2-dependent spindle checkpoint.</title>
        <authorList>
            <person name="Garcia M.A."/>
            <person name="Vardy L."/>
            <person name="Koonrugsa N."/>
            <person name="Toda T."/>
        </authorList>
    </citation>
    <scope>NUCLEOTIDE SEQUENCE [GENOMIC DNA]</scope>
    <scope>FUNCTION</scope>
    <scope>SUBCELLULAR LOCATION</scope>
    <source>
        <strain>972 / ATCC 24843</strain>
    </source>
</reference>
<reference key="2">
    <citation type="journal article" date="2002" name="Nature">
        <title>The genome sequence of Schizosaccharomyces pombe.</title>
        <authorList>
            <person name="Wood V."/>
            <person name="Gwilliam R."/>
            <person name="Rajandream M.A."/>
            <person name="Lyne M.H."/>
            <person name="Lyne R."/>
            <person name="Stewart A."/>
            <person name="Sgouros J.G."/>
            <person name="Peat N."/>
            <person name="Hayles J."/>
            <person name="Baker S.G."/>
            <person name="Basham D."/>
            <person name="Bowman S."/>
            <person name="Brooks K."/>
            <person name="Brown D."/>
            <person name="Brown S."/>
            <person name="Chillingworth T."/>
            <person name="Churcher C.M."/>
            <person name="Collins M."/>
            <person name="Connor R."/>
            <person name="Cronin A."/>
            <person name="Davis P."/>
            <person name="Feltwell T."/>
            <person name="Fraser A."/>
            <person name="Gentles S."/>
            <person name="Goble A."/>
            <person name="Hamlin N."/>
            <person name="Harris D.E."/>
            <person name="Hidalgo J."/>
            <person name="Hodgson G."/>
            <person name="Holroyd S."/>
            <person name="Hornsby T."/>
            <person name="Howarth S."/>
            <person name="Huckle E.J."/>
            <person name="Hunt S."/>
            <person name="Jagels K."/>
            <person name="James K.D."/>
            <person name="Jones L."/>
            <person name="Jones M."/>
            <person name="Leather S."/>
            <person name="McDonald S."/>
            <person name="McLean J."/>
            <person name="Mooney P."/>
            <person name="Moule S."/>
            <person name="Mungall K.L."/>
            <person name="Murphy L.D."/>
            <person name="Niblett D."/>
            <person name="Odell C."/>
            <person name="Oliver K."/>
            <person name="O'Neil S."/>
            <person name="Pearson D."/>
            <person name="Quail M.A."/>
            <person name="Rabbinowitsch E."/>
            <person name="Rutherford K.M."/>
            <person name="Rutter S."/>
            <person name="Saunders D."/>
            <person name="Seeger K."/>
            <person name="Sharp S."/>
            <person name="Skelton J."/>
            <person name="Simmonds M.N."/>
            <person name="Squares R."/>
            <person name="Squares S."/>
            <person name="Stevens K."/>
            <person name="Taylor K."/>
            <person name="Taylor R.G."/>
            <person name="Tivey A."/>
            <person name="Walsh S.V."/>
            <person name="Warren T."/>
            <person name="Whitehead S."/>
            <person name="Woodward J.R."/>
            <person name="Volckaert G."/>
            <person name="Aert R."/>
            <person name="Robben J."/>
            <person name="Grymonprez B."/>
            <person name="Weltjens I."/>
            <person name="Vanstreels E."/>
            <person name="Rieger M."/>
            <person name="Schaefer M."/>
            <person name="Mueller-Auer S."/>
            <person name="Gabel C."/>
            <person name="Fuchs M."/>
            <person name="Duesterhoeft A."/>
            <person name="Fritzc C."/>
            <person name="Holzer E."/>
            <person name="Moestl D."/>
            <person name="Hilbert H."/>
            <person name="Borzym K."/>
            <person name="Langer I."/>
            <person name="Beck A."/>
            <person name="Lehrach H."/>
            <person name="Reinhardt R."/>
            <person name="Pohl T.M."/>
            <person name="Eger P."/>
            <person name="Zimmermann W."/>
            <person name="Wedler H."/>
            <person name="Wambutt R."/>
            <person name="Purnelle B."/>
            <person name="Goffeau A."/>
            <person name="Cadieu E."/>
            <person name="Dreano S."/>
            <person name="Gloux S."/>
            <person name="Lelaure V."/>
            <person name="Mottier S."/>
            <person name="Galibert F."/>
            <person name="Aves S.J."/>
            <person name="Xiang Z."/>
            <person name="Hunt C."/>
            <person name="Moore K."/>
            <person name="Hurst S.M."/>
            <person name="Lucas M."/>
            <person name="Rochet M."/>
            <person name="Gaillardin C."/>
            <person name="Tallada V.A."/>
            <person name="Garzon A."/>
            <person name="Thode G."/>
            <person name="Daga R.R."/>
            <person name="Cruzado L."/>
            <person name="Jimenez J."/>
            <person name="Sanchez M."/>
            <person name="del Rey F."/>
            <person name="Benito J."/>
            <person name="Dominguez A."/>
            <person name="Revuelta J.L."/>
            <person name="Moreno S."/>
            <person name="Armstrong J."/>
            <person name="Forsburg S.L."/>
            <person name="Cerutti L."/>
            <person name="Lowe T."/>
            <person name="McCombie W.R."/>
            <person name="Paulsen I."/>
            <person name="Potashkin J."/>
            <person name="Shpakovski G.V."/>
            <person name="Ussery D."/>
            <person name="Barrell B.G."/>
            <person name="Nurse P."/>
        </authorList>
    </citation>
    <scope>NUCLEOTIDE SEQUENCE [LARGE SCALE GENOMIC DNA]</scope>
    <source>
        <strain>972 / ATCC 24843</strain>
    </source>
</reference>
<reference key="3">
    <citation type="journal article" date="2004" name="Mol. Biol. Cell">
        <title>Interdependency of fission yeast Alp14/TOG and coiled coil protein Alp7 in microtubule localization and bipolar spindle formation.</title>
        <authorList>
            <person name="Sato M."/>
            <person name="Vardy L."/>
            <person name="Angel Garcia M."/>
            <person name="Koonrugsa N."/>
            <person name="Toda T."/>
        </authorList>
    </citation>
    <scope>FUNCTION</scope>
    <scope>INTERACTION WITH ALP7</scope>
    <scope>SUBCELLULAR LOCATION</scope>
</reference>
<reference key="4">
    <citation type="journal article" date="2006" name="Nat. Biotechnol.">
        <title>ORFeome cloning and global analysis of protein localization in the fission yeast Schizosaccharomyces pombe.</title>
        <authorList>
            <person name="Matsuyama A."/>
            <person name="Arai R."/>
            <person name="Yashiroda Y."/>
            <person name="Shirai A."/>
            <person name="Kamata A."/>
            <person name="Sekido S."/>
            <person name="Kobayashi Y."/>
            <person name="Hashimoto A."/>
            <person name="Hamamoto M."/>
            <person name="Hiraoka Y."/>
            <person name="Horinouchi S."/>
            <person name="Yoshida M."/>
        </authorList>
    </citation>
    <scope>SUBCELLULAR LOCATION [LARGE SCALE ANALYSIS]</scope>
</reference>
<reference key="5">
    <citation type="journal article" date="2008" name="J. Proteome Res.">
        <title>Phosphoproteome analysis of fission yeast.</title>
        <authorList>
            <person name="Wilson-Grady J.T."/>
            <person name="Villen J."/>
            <person name="Gygi S.P."/>
        </authorList>
    </citation>
    <scope>PHOSPHORYLATION [LARGE SCALE ANALYSIS] AT SER-543; SER-548; SER-697 AND SER-720</scope>
    <scope>IDENTIFICATION BY MASS SPECTROMETRY</scope>
</reference>
<protein>
    <recommendedName>
        <fullName>Spindle pole body component alp14</fullName>
    </recommendedName>
    <alternativeName>
        <fullName>Altered polarity protein 14</fullName>
    </alternativeName>
</protein>
<proteinExistence type="evidence at protein level"/>
<comment type="function">
    <text evidence="3 4">Required for bipolar spindle formation and proper chromosome segregation. Has a role in connecting the kinetochores and the plus end of pole to chromosome microtubules. Also required for the activation of the spindle checkpoint pathway.</text>
</comment>
<comment type="subunit">
    <text evidence="4">Interacts with alp14.</text>
</comment>
<comment type="interaction">
    <interactant intactId="EBI-1556727">
        <id>O94534</id>
    </interactant>
    <interactant intactId="EBI-1556697">
        <id>Q9URY2</id>
        <label>alp7</label>
    </interactant>
    <organismsDiffer>false</organismsDiffer>
    <experiments>13</experiments>
</comment>
<comment type="subcellular location">
    <subcellularLocation>
        <location>Cytoplasm</location>
        <location>Cytoskeleton</location>
        <location>Microtubule organizing center</location>
        <location>Spindle pole body</location>
    </subcellularLocation>
    <subcellularLocation>
        <location>Chromosome</location>
        <location>Centromere</location>
        <location>Kinetochore</location>
    </subcellularLocation>
    <text>Kinetochore periphery. Spindle localization is alp7-dependent.</text>
</comment>
<comment type="similarity">
    <text evidence="6">Belongs to the TOG/XMAP215 family.</text>
</comment>
<accession>O94534</accession>
<name>ALP14_SCHPO</name>
<keyword id="KW-0131">Cell cycle</keyword>
<keyword id="KW-0132">Cell division</keyword>
<keyword id="KW-0137">Centromere</keyword>
<keyword id="KW-0158">Chromosome</keyword>
<keyword id="KW-0175">Coiled coil</keyword>
<keyword id="KW-0963">Cytoplasm</keyword>
<keyword id="KW-0206">Cytoskeleton</keyword>
<keyword id="KW-0995">Kinetochore</keyword>
<keyword id="KW-0493">Microtubule</keyword>
<keyword id="KW-0498">Mitosis</keyword>
<keyword id="KW-0597">Phosphoprotein</keyword>
<keyword id="KW-1185">Reference proteome</keyword>
<keyword id="KW-0677">Repeat</keyword>
<organism>
    <name type="scientific">Schizosaccharomyces pombe (strain 972 / ATCC 24843)</name>
    <name type="common">Fission yeast</name>
    <dbReference type="NCBI Taxonomy" id="284812"/>
    <lineage>
        <taxon>Eukaryota</taxon>
        <taxon>Fungi</taxon>
        <taxon>Dikarya</taxon>
        <taxon>Ascomycota</taxon>
        <taxon>Taphrinomycotina</taxon>
        <taxon>Schizosaccharomycetes</taxon>
        <taxon>Schizosaccharomycetales</taxon>
        <taxon>Schizosaccharomycetaceae</taxon>
        <taxon>Schizosaccharomyces</taxon>
    </lineage>
</organism>
<dbReference type="EMBL" id="AB032409">
    <property type="protein sequence ID" value="BAA84527.1"/>
    <property type="molecule type" value="Genomic_DNA"/>
</dbReference>
<dbReference type="EMBL" id="CU329672">
    <property type="protein sequence ID" value="CAA22843.1"/>
    <property type="molecule type" value="Genomic_DNA"/>
</dbReference>
<dbReference type="PIR" id="T41645">
    <property type="entry name" value="T41645"/>
</dbReference>
<dbReference type="RefSeq" id="NP_588048.1">
    <property type="nucleotide sequence ID" value="NM_001023040.2"/>
</dbReference>
<dbReference type="SMR" id="O94534"/>
<dbReference type="BioGRID" id="276060">
    <property type="interactions" value="144"/>
</dbReference>
<dbReference type="DIP" id="DIP-39988N"/>
<dbReference type="FunCoup" id="O94534">
    <property type="interactions" value="28"/>
</dbReference>
<dbReference type="IntAct" id="O94534">
    <property type="interactions" value="1"/>
</dbReference>
<dbReference type="MINT" id="O94534"/>
<dbReference type="STRING" id="284812.O94534"/>
<dbReference type="iPTMnet" id="O94534"/>
<dbReference type="PaxDb" id="4896-SPCC895.07.1"/>
<dbReference type="EnsemblFungi" id="SPCC895.07.1">
    <property type="protein sequence ID" value="SPCC895.07.1:pep"/>
    <property type="gene ID" value="SPCC895.07"/>
</dbReference>
<dbReference type="GeneID" id="2539497"/>
<dbReference type="KEGG" id="spo:2539497"/>
<dbReference type="PomBase" id="SPCC895.07">
    <property type="gene designation" value="alp14"/>
</dbReference>
<dbReference type="VEuPathDB" id="FungiDB:SPCC895.07"/>
<dbReference type="eggNOG" id="KOG1820">
    <property type="taxonomic scope" value="Eukaryota"/>
</dbReference>
<dbReference type="HOGENOM" id="CLU_008401_1_0_1"/>
<dbReference type="InParanoid" id="O94534"/>
<dbReference type="OMA" id="HNFGCKI"/>
<dbReference type="PhylomeDB" id="O94534"/>
<dbReference type="CD-CODE" id="576F0A76">
    <property type="entry name" value="Centrosome"/>
</dbReference>
<dbReference type="PRO" id="PR:O94534"/>
<dbReference type="Proteomes" id="UP000002485">
    <property type="component" value="Chromosome III"/>
</dbReference>
<dbReference type="GO" id="GO:0005881">
    <property type="term" value="C:cytoplasmic microtubule"/>
    <property type="evidence" value="ECO:0000314"/>
    <property type="project" value="PomBase"/>
</dbReference>
<dbReference type="GO" id="GO:1904511">
    <property type="term" value="C:cytoplasmic microtubule plus-end"/>
    <property type="evidence" value="ECO:0000314"/>
    <property type="project" value="PomBase"/>
</dbReference>
<dbReference type="GO" id="GO:0005829">
    <property type="term" value="C:cytosol"/>
    <property type="evidence" value="ECO:0007005"/>
    <property type="project" value="PomBase"/>
</dbReference>
<dbReference type="GO" id="GO:0000776">
    <property type="term" value="C:kinetochore"/>
    <property type="evidence" value="ECO:0000314"/>
    <property type="project" value="PomBase"/>
</dbReference>
<dbReference type="GO" id="GO:0072687">
    <property type="term" value="C:meiotic spindle"/>
    <property type="evidence" value="ECO:0000269"/>
    <property type="project" value="PomBase"/>
</dbReference>
<dbReference type="GO" id="GO:0015630">
    <property type="term" value="C:microtubule cytoskeleton"/>
    <property type="evidence" value="ECO:0007005"/>
    <property type="project" value="PomBase"/>
</dbReference>
<dbReference type="GO" id="GO:0072686">
    <property type="term" value="C:mitotic spindle"/>
    <property type="evidence" value="ECO:0000314"/>
    <property type="project" value="PomBase"/>
</dbReference>
<dbReference type="GO" id="GO:1990498">
    <property type="term" value="C:mitotic spindle microtubule"/>
    <property type="evidence" value="ECO:0000314"/>
    <property type="project" value="PomBase"/>
</dbReference>
<dbReference type="GO" id="GO:0044732">
    <property type="term" value="C:mitotic spindle pole body"/>
    <property type="evidence" value="ECO:0000314"/>
    <property type="project" value="PomBase"/>
</dbReference>
<dbReference type="GO" id="GO:0005634">
    <property type="term" value="C:nucleus"/>
    <property type="evidence" value="ECO:0000314"/>
    <property type="project" value="PomBase"/>
</dbReference>
<dbReference type="GO" id="GO:0000940">
    <property type="term" value="C:outer kinetochore"/>
    <property type="evidence" value="ECO:0000314"/>
    <property type="project" value="PomBase"/>
</dbReference>
<dbReference type="GO" id="GO:0000922">
    <property type="term" value="C:spindle pole"/>
    <property type="evidence" value="ECO:0000318"/>
    <property type="project" value="GO_Central"/>
</dbReference>
<dbReference type="GO" id="GO:0005816">
    <property type="term" value="C:spindle pole body"/>
    <property type="evidence" value="ECO:0000318"/>
    <property type="project" value="GO_Central"/>
</dbReference>
<dbReference type="GO" id="GO:0099070">
    <property type="term" value="C:static microtubule bundle"/>
    <property type="evidence" value="ECO:0000314"/>
    <property type="project" value="PomBase"/>
</dbReference>
<dbReference type="GO" id="GO:0070850">
    <property type="term" value="C:TACC/TOG complex"/>
    <property type="evidence" value="ECO:0000314"/>
    <property type="project" value="PomBase"/>
</dbReference>
<dbReference type="GO" id="GO:0008017">
    <property type="term" value="F:microtubule binding"/>
    <property type="evidence" value="ECO:0000318"/>
    <property type="project" value="GO_Central"/>
</dbReference>
<dbReference type="GO" id="GO:0061863">
    <property type="term" value="F:microtubule plus end polymerase"/>
    <property type="evidence" value="ECO:0000314"/>
    <property type="project" value="PomBase"/>
</dbReference>
<dbReference type="GO" id="GO:0051010">
    <property type="term" value="F:microtubule plus-end binding"/>
    <property type="evidence" value="ECO:0000304"/>
    <property type="project" value="PomBase"/>
</dbReference>
<dbReference type="GO" id="GO:0051315">
    <property type="term" value="P:attachment of mitotic spindle microtubules to kinetochore"/>
    <property type="evidence" value="ECO:0000269"/>
    <property type="project" value="PomBase"/>
</dbReference>
<dbReference type="GO" id="GO:0051301">
    <property type="term" value="P:cell division"/>
    <property type="evidence" value="ECO:0007669"/>
    <property type="project" value="UniProtKB-KW"/>
</dbReference>
<dbReference type="GO" id="GO:0031122">
    <property type="term" value="P:cytoplasmic microtubule organization"/>
    <property type="evidence" value="ECO:0000269"/>
    <property type="project" value="PomBase"/>
</dbReference>
<dbReference type="GO" id="GO:0030951">
    <property type="term" value="P:establishment or maintenance of microtubule cytoskeleton polarity"/>
    <property type="evidence" value="ECO:0000318"/>
    <property type="project" value="GO_Central"/>
</dbReference>
<dbReference type="GO" id="GO:1990571">
    <property type="term" value="P:meiotic centromere clustering"/>
    <property type="evidence" value="ECO:0000315"/>
    <property type="project" value="PomBase"/>
</dbReference>
<dbReference type="GO" id="GO:0051417">
    <property type="term" value="P:microtubule nucleation by spindle pole body"/>
    <property type="evidence" value="ECO:0000315"/>
    <property type="project" value="PomBase"/>
</dbReference>
<dbReference type="GO" id="GO:0046785">
    <property type="term" value="P:microtubule polymerization"/>
    <property type="evidence" value="ECO:0000318"/>
    <property type="project" value="GO_Central"/>
</dbReference>
<dbReference type="GO" id="GO:0090307">
    <property type="term" value="P:mitotic spindle assembly"/>
    <property type="evidence" value="ECO:0000315"/>
    <property type="project" value="PomBase"/>
</dbReference>
<dbReference type="GO" id="GO:0000022">
    <property type="term" value="P:mitotic spindle elongation"/>
    <property type="evidence" value="ECO:0000315"/>
    <property type="project" value="PomBase"/>
</dbReference>
<dbReference type="GO" id="GO:0007052">
    <property type="term" value="P:mitotic spindle organization"/>
    <property type="evidence" value="ECO:0000318"/>
    <property type="project" value="GO_Central"/>
</dbReference>
<dbReference type="GO" id="GO:0140210">
    <property type="term" value="P:protein transport along microtubule to kinetochore"/>
    <property type="evidence" value="ECO:0000315"/>
    <property type="project" value="PomBase"/>
</dbReference>
<dbReference type="FunFam" id="1.25.10.10:FF:000019">
    <property type="entry name" value="Cytoskeleton-associated protein 5"/>
    <property type="match status" value="1"/>
</dbReference>
<dbReference type="Gene3D" id="1.25.10.10">
    <property type="entry name" value="Leucine-rich Repeat Variant"/>
    <property type="match status" value="2"/>
</dbReference>
<dbReference type="InterPro" id="IPR011989">
    <property type="entry name" value="ARM-like"/>
</dbReference>
<dbReference type="InterPro" id="IPR016024">
    <property type="entry name" value="ARM-type_fold"/>
</dbReference>
<dbReference type="InterPro" id="IPR034085">
    <property type="entry name" value="TOG"/>
</dbReference>
<dbReference type="InterPro" id="IPR045110">
    <property type="entry name" value="XMAP215"/>
</dbReference>
<dbReference type="InterPro" id="IPR048491">
    <property type="entry name" value="XMAP215_CLASP_TOG"/>
</dbReference>
<dbReference type="PANTHER" id="PTHR12609">
    <property type="entry name" value="MICROTUBULE ASSOCIATED PROTEIN XMAP215"/>
    <property type="match status" value="1"/>
</dbReference>
<dbReference type="Pfam" id="PF21041">
    <property type="entry name" value="XMAP215_CLASP_TOG"/>
    <property type="match status" value="2"/>
</dbReference>
<dbReference type="SMART" id="SM01349">
    <property type="entry name" value="TOG"/>
    <property type="match status" value="2"/>
</dbReference>
<dbReference type="SUPFAM" id="SSF48371">
    <property type="entry name" value="ARM repeat"/>
    <property type="match status" value="1"/>
</dbReference>
<gene>
    <name type="primary">alp14</name>
    <name type="synonym">mtc1</name>
    <name type="ORF">SPCC895.07</name>
</gene>
<feature type="chain" id="PRO_0000064566" description="Spindle pole body component alp14">
    <location>
        <begin position="1"/>
        <end position="809"/>
    </location>
</feature>
<feature type="repeat" description="HEAT 1">
    <location>
        <begin position="127"/>
        <end position="164"/>
    </location>
</feature>
<feature type="repeat" description="HEAT 2">
    <location>
        <begin position="167"/>
        <end position="204"/>
    </location>
</feature>
<feature type="region of interest" description="Disordered" evidence="2">
    <location>
        <begin position="233"/>
        <end position="274"/>
    </location>
</feature>
<feature type="region of interest" description="Disordered" evidence="2">
    <location>
        <begin position="507"/>
        <end position="608"/>
    </location>
</feature>
<feature type="region of interest" description="Disordered" evidence="2">
    <location>
        <begin position="619"/>
        <end position="638"/>
    </location>
</feature>
<feature type="coiled-coil region" evidence="1">
    <location>
        <begin position="637"/>
        <end position="697"/>
    </location>
</feature>
<feature type="compositionally biased region" description="Polar residues" evidence="2">
    <location>
        <begin position="239"/>
        <end position="253"/>
    </location>
</feature>
<feature type="compositionally biased region" description="Acidic residues" evidence="2">
    <location>
        <begin position="262"/>
        <end position="274"/>
    </location>
</feature>
<feature type="compositionally biased region" description="Basic residues" evidence="2">
    <location>
        <begin position="509"/>
        <end position="518"/>
    </location>
</feature>
<feature type="compositionally biased region" description="Low complexity" evidence="2">
    <location>
        <begin position="526"/>
        <end position="551"/>
    </location>
</feature>
<feature type="compositionally biased region" description="Low complexity" evidence="2">
    <location>
        <begin position="582"/>
        <end position="595"/>
    </location>
</feature>
<feature type="compositionally biased region" description="Polar residues" evidence="2">
    <location>
        <begin position="597"/>
        <end position="608"/>
    </location>
</feature>
<feature type="modified residue" description="Phosphoserine" evidence="5">
    <location>
        <position position="543"/>
    </location>
</feature>
<feature type="modified residue" description="Phosphoserine" evidence="5">
    <location>
        <position position="548"/>
    </location>
</feature>
<feature type="modified residue" description="Phosphoserine" evidence="5">
    <location>
        <position position="697"/>
    </location>
</feature>
<feature type="modified residue" description="Phosphoserine" evidence="5">
    <location>
        <position position="720"/>
    </location>
</feature>